<reference key="1">
    <citation type="journal article" date="2002" name="Science">
        <title>The genome sequence of the malaria mosquito Anopheles gambiae.</title>
        <authorList>
            <person name="Holt R.A."/>
            <person name="Subramanian G.M."/>
            <person name="Halpern A."/>
            <person name="Sutton G.G."/>
            <person name="Charlab R."/>
            <person name="Nusskern D.R."/>
            <person name="Wincker P."/>
            <person name="Clark A.G."/>
            <person name="Ribeiro J.M.C."/>
            <person name="Wides R."/>
            <person name="Salzberg S.L."/>
            <person name="Loftus B.J."/>
            <person name="Yandell M.D."/>
            <person name="Majoros W.H."/>
            <person name="Rusch D.B."/>
            <person name="Lai Z."/>
            <person name="Kraft C.L."/>
            <person name="Abril J.F."/>
            <person name="Anthouard V."/>
            <person name="Arensburger P."/>
            <person name="Atkinson P.W."/>
            <person name="Baden H."/>
            <person name="de Berardinis V."/>
            <person name="Baldwin D."/>
            <person name="Benes V."/>
            <person name="Biedler J."/>
            <person name="Blass C."/>
            <person name="Bolanos R."/>
            <person name="Boscus D."/>
            <person name="Barnstead M."/>
            <person name="Cai S."/>
            <person name="Center A."/>
            <person name="Chaturverdi K."/>
            <person name="Christophides G.K."/>
            <person name="Chrystal M.A.M."/>
            <person name="Clamp M."/>
            <person name="Cravchik A."/>
            <person name="Curwen V."/>
            <person name="Dana A."/>
            <person name="Delcher A."/>
            <person name="Dew I."/>
            <person name="Evans C.A."/>
            <person name="Flanigan M."/>
            <person name="Grundschober-Freimoser A."/>
            <person name="Friedli L."/>
            <person name="Gu Z."/>
            <person name="Guan P."/>
            <person name="Guigo R."/>
            <person name="Hillenmeyer M.E."/>
            <person name="Hladun S.L."/>
            <person name="Hogan J.R."/>
            <person name="Hong Y.S."/>
            <person name="Hoover J."/>
            <person name="Jaillon O."/>
            <person name="Ke Z."/>
            <person name="Kodira C.D."/>
            <person name="Kokoza E."/>
            <person name="Koutsos A."/>
            <person name="Letunic I."/>
            <person name="Levitsky A.A."/>
            <person name="Liang Y."/>
            <person name="Lin J.-J."/>
            <person name="Lobo N.F."/>
            <person name="Lopez J.R."/>
            <person name="Malek J.A."/>
            <person name="McIntosh T.C."/>
            <person name="Meister S."/>
            <person name="Miller J.R."/>
            <person name="Mobarry C."/>
            <person name="Mongin E."/>
            <person name="Murphy S.D."/>
            <person name="O'Brochta D.A."/>
            <person name="Pfannkoch C."/>
            <person name="Qi R."/>
            <person name="Regier M.A."/>
            <person name="Remington K."/>
            <person name="Shao H."/>
            <person name="Sharakhova M.V."/>
            <person name="Sitter C.D."/>
            <person name="Shetty J."/>
            <person name="Smith T.J."/>
            <person name="Strong R."/>
            <person name="Sun J."/>
            <person name="Thomasova D."/>
            <person name="Ton L.Q."/>
            <person name="Topalis P."/>
            <person name="Tu Z.J."/>
            <person name="Unger M.F."/>
            <person name="Walenz B."/>
            <person name="Wang A.H."/>
            <person name="Wang J."/>
            <person name="Wang M."/>
            <person name="Wang X."/>
            <person name="Woodford K.J."/>
            <person name="Wortman J.R."/>
            <person name="Wu M."/>
            <person name="Yao A."/>
            <person name="Zdobnov E.M."/>
            <person name="Zhang H."/>
            <person name="Zhao Q."/>
            <person name="Zhao S."/>
            <person name="Zhu S.C."/>
            <person name="Zhimulev I."/>
            <person name="Coluzzi M."/>
            <person name="della Torre A."/>
            <person name="Roth C.W."/>
            <person name="Louis C."/>
            <person name="Kalush F."/>
            <person name="Mural R.J."/>
            <person name="Myers E.W."/>
            <person name="Adams M.D."/>
            <person name="Smith H.O."/>
            <person name="Broder S."/>
            <person name="Gardner M.J."/>
            <person name="Fraser C.M."/>
            <person name="Birney E."/>
            <person name="Bork P."/>
            <person name="Brey P.T."/>
            <person name="Venter J.C."/>
            <person name="Weissenbach J."/>
            <person name="Kafatos F.C."/>
            <person name="Collins F.H."/>
            <person name="Hoffman S.L."/>
        </authorList>
    </citation>
    <scope>NUCLEOTIDE SEQUENCE [LARGE SCALE GENOMIC DNA]</scope>
    <source>
        <strain>PEST</strain>
    </source>
</reference>
<accession>Q7Q9F6</accession>
<protein>
    <recommendedName>
        <fullName evidence="1">Protein kintoun</fullName>
    </recommendedName>
    <alternativeName>
        <fullName evidence="1">Dynein assembly factor 2, axonemal homolog</fullName>
    </alternativeName>
</protein>
<name>KTU_ANOGA</name>
<feature type="chain" id="PRO_0000365803" description="Protein kintoun">
    <location>
        <begin position="1"/>
        <end position="862"/>
    </location>
</feature>
<feature type="region of interest" description="Disordered" evidence="2">
    <location>
        <begin position="208"/>
        <end position="229"/>
    </location>
</feature>
<feature type="region of interest" description="Disordered" evidence="2">
    <location>
        <begin position="564"/>
        <end position="602"/>
    </location>
</feature>
<feature type="region of interest" description="Disordered" evidence="2">
    <location>
        <begin position="626"/>
        <end position="670"/>
    </location>
</feature>
<feature type="region of interest" description="Disordered" evidence="2">
    <location>
        <begin position="743"/>
        <end position="854"/>
    </location>
</feature>
<feature type="compositionally biased region" description="Basic and acidic residues" evidence="2">
    <location>
        <begin position="564"/>
        <end position="586"/>
    </location>
</feature>
<feature type="compositionally biased region" description="Basic residues" evidence="2">
    <location>
        <begin position="587"/>
        <end position="601"/>
    </location>
</feature>
<feature type="compositionally biased region" description="Basic and acidic residues" evidence="2">
    <location>
        <begin position="748"/>
        <end position="757"/>
    </location>
</feature>
<feature type="compositionally biased region" description="Basic and acidic residues" evidence="2">
    <location>
        <begin position="766"/>
        <end position="785"/>
    </location>
</feature>
<comment type="function">
    <text evidence="1">Required for cytoplasmic pre-assembly of axonemal dyneins, thereby playing a central role in motility in cilia and flagella. Involved in pre-assembly of dynein arm complexes in the cytoplasm before intraflagellar transport loads them for the ciliary compartment.</text>
</comment>
<comment type="subcellular location">
    <subcellularLocation>
        <location evidence="1">Cytoplasm</location>
    </subcellularLocation>
</comment>
<comment type="similarity">
    <text evidence="1">Belongs to the PIH1 family. Kintoun subfamily.</text>
</comment>
<keyword id="KW-0963">Cytoplasm</keyword>
<keyword id="KW-1185">Reference proteome</keyword>
<sequence>MSTKDFNISRDEFRNITRCLDNEEFRNLFMEYCTELRDNRKQYEDELSMLEAQRGYDVKFLKPSPGYVIKTIVDGKGKGFINVCQSELVQKPTSTTGLNEDGTKGLKWSVPYAQTQPRKDYDNKRVECTVYDVMFHPDALHLASKNEGFRKLLNDTSLDAVEQSFKVRLDRANLRFPKLQYKGTPSSSVVREKLPHCDSLPKDELFDKLLPPLPNVPAPGKTGSERTTKTKNKENINRTAAVAAAAASPGNPFYTTPEYKIVQCRDVEYGEMTNELDAKIDVTIPRELKVVITLPLLKSTAECALDVTKTTLHLVSEKPARYKLELKLPYEVKESEGKATFNVEARSLTVTLPVLRKRNITLQDINSANVSASPAKEAGKLIEEIGTIIPPAGGDQQLARAASAPSAPEVPKKTIFPKFSVNKMENLLAFTLNVRNVDPSTIQLDNRTDSVHCRFSNVGNGYFPCFYVFFVRFPNALVTDVQHEEWDNNLIIQITLNTASVSSYQAGPDEHETVEYSIMEDIADKINKFGKEIEDDSLCIAVVRQATKASAKVKADALMSIEITKREEHGEPECDEKDGSEAEKARTLQKAKRNSRKKKKERSLSDSFCDHLKVIVENEASTEVAGEGATIQSSAKPIDSPEAKARKARSISECCPPKESDGGEEASTMPTLTRKYKSILKRSSYDRSISECSSVDDLGTSVEMARSIGEECRKTVRFNNSIRKQLFRSNSCILTMKKKALKRREVKRRADARRMSEGESTDNDEKDAHHHDDEHCSSSDQHDEKDAIEDDSGVSFDSESGDKEIAAAMKAEAIGGGGRGKAASKRKNSNKQGGAKSNGGKKQGTDAKNIQFKSDMIFDIEI</sequence>
<proteinExistence type="inferred from homology"/>
<organism>
    <name type="scientific">Anopheles gambiae</name>
    <name type="common">African malaria mosquito</name>
    <dbReference type="NCBI Taxonomy" id="7165"/>
    <lineage>
        <taxon>Eukaryota</taxon>
        <taxon>Metazoa</taxon>
        <taxon>Ecdysozoa</taxon>
        <taxon>Arthropoda</taxon>
        <taxon>Hexapoda</taxon>
        <taxon>Insecta</taxon>
        <taxon>Pterygota</taxon>
        <taxon>Neoptera</taxon>
        <taxon>Endopterygota</taxon>
        <taxon>Diptera</taxon>
        <taxon>Nematocera</taxon>
        <taxon>Culicoidea</taxon>
        <taxon>Culicidae</taxon>
        <taxon>Anophelinae</taxon>
        <taxon>Anopheles</taxon>
    </lineage>
</organism>
<evidence type="ECO:0000255" key="1">
    <source>
        <dbReference type="HAMAP-Rule" id="MF_03069"/>
    </source>
</evidence>
<evidence type="ECO:0000256" key="2">
    <source>
        <dbReference type="SAM" id="MobiDB-lite"/>
    </source>
</evidence>
<dbReference type="EMBL" id="AAAB01008900">
    <property type="protein sequence ID" value="EAA09341.4"/>
    <property type="molecule type" value="Genomic_DNA"/>
</dbReference>
<dbReference type="RefSeq" id="XP_314165.4">
    <property type="nucleotide sequence ID" value="XM_314165.4"/>
</dbReference>
<dbReference type="SMR" id="Q7Q9F6"/>
<dbReference type="FunCoup" id="Q7Q9F6">
    <property type="interactions" value="425"/>
</dbReference>
<dbReference type="STRING" id="7165.Q7Q9F6"/>
<dbReference type="PaxDb" id="7165-AGAP005250-PA"/>
<dbReference type="VEuPathDB" id="VectorBase:AGAMI1_001769"/>
<dbReference type="VEuPathDB" id="VectorBase:AGAP005250"/>
<dbReference type="eggNOG" id="KOG4356">
    <property type="taxonomic scope" value="Eukaryota"/>
</dbReference>
<dbReference type="HOGENOM" id="CLU_012715_0_0_1"/>
<dbReference type="InParanoid" id="Q7Q9F6"/>
<dbReference type="OMA" id="CFLNISK"/>
<dbReference type="PhylomeDB" id="Q7Q9F6"/>
<dbReference type="Proteomes" id="UP000007062">
    <property type="component" value="Chromosome 2L"/>
</dbReference>
<dbReference type="GO" id="GO:0005737">
    <property type="term" value="C:cytoplasm"/>
    <property type="evidence" value="ECO:0000318"/>
    <property type="project" value="GO_Central"/>
</dbReference>
<dbReference type="GO" id="GO:0070286">
    <property type="term" value="P:axonemal dynein complex assembly"/>
    <property type="evidence" value="ECO:0007669"/>
    <property type="project" value="UniProtKB-UniRule"/>
</dbReference>
<dbReference type="GO" id="GO:0060285">
    <property type="term" value="P:cilium-dependent cell motility"/>
    <property type="evidence" value="ECO:0007669"/>
    <property type="project" value="UniProtKB-UniRule"/>
</dbReference>
<dbReference type="HAMAP" id="MF_03069">
    <property type="entry name" value="Kintoun"/>
    <property type="match status" value="1"/>
</dbReference>
<dbReference type="InterPro" id="IPR034727">
    <property type="entry name" value="Kintoun"/>
</dbReference>
<dbReference type="InterPro" id="IPR050734">
    <property type="entry name" value="PIH1/Kintoun_subfamily"/>
</dbReference>
<dbReference type="InterPro" id="IPR012981">
    <property type="entry name" value="PIH1_N"/>
</dbReference>
<dbReference type="InterPro" id="IPR041442">
    <property type="entry name" value="PIH1D1/2/3_CS-like"/>
</dbReference>
<dbReference type="PANTHER" id="PTHR22997">
    <property type="entry name" value="PIH1 DOMAIN-CONTAINING PROTEIN 1"/>
    <property type="match status" value="1"/>
</dbReference>
<dbReference type="PANTHER" id="PTHR22997:SF3">
    <property type="entry name" value="PROTEIN KINTOUN"/>
    <property type="match status" value="1"/>
</dbReference>
<dbReference type="Pfam" id="PF08190">
    <property type="entry name" value="PIH1"/>
    <property type="match status" value="1"/>
</dbReference>
<dbReference type="Pfam" id="PF18201">
    <property type="entry name" value="PIH1_CS"/>
    <property type="match status" value="1"/>
</dbReference>
<gene>
    <name type="ORF">AGAP005250</name>
</gene>